<gene>
    <name type="ORF">IIV6-293R</name>
</gene>
<feature type="chain" id="PRO_0000377845" description="Uncharacterized protein 293R">
    <location>
        <begin position="1"/>
        <end position="152"/>
    </location>
</feature>
<dbReference type="EMBL" id="AF303741">
    <property type="protein sequence ID" value="AAK82154.1"/>
    <property type="molecule type" value="Genomic_DNA"/>
</dbReference>
<dbReference type="RefSeq" id="NP_149756.1">
    <property type="nucleotide sequence ID" value="NC_003038.1"/>
</dbReference>
<dbReference type="KEGG" id="vg:1733142"/>
<dbReference type="OrthoDB" id="37414at10239"/>
<dbReference type="Proteomes" id="UP000001359">
    <property type="component" value="Genome"/>
</dbReference>
<name>293R_IIV6</name>
<organismHost>
    <name type="scientific">Acheta domesticus</name>
    <name type="common">House cricket</name>
    <dbReference type="NCBI Taxonomy" id="6997"/>
</organismHost>
<organismHost>
    <name type="scientific">Chilo suppressalis</name>
    <name type="common">Asiatic rice borer moth</name>
    <dbReference type="NCBI Taxonomy" id="168631"/>
</organismHost>
<organismHost>
    <name type="scientific">Gryllus bimaculatus</name>
    <name type="common">Two-spotted cricket</name>
    <dbReference type="NCBI Taxonomy" id="6999"/>
</organismHost>
<organismHost>
    <name type="scientific">Gryllus campestris</name>
    <dbReference type="NCBI Taxonomy" id="58607"/>
</organismHost>
<organismHost>
    <name type="scientific">Spodoptera frugiperda</name>
    <name type="common">Fall armyworm</name>
    <dbReference type="NCBI Taxonomy" id="7108"/>
</organismHost>
<reference key="1">
    <citation type="journal article" date="2001" name="Virology">
        <title>Analysis of the first complete DNA sequence of an invertebrate iridovirus: coding strategy of the genome of Chilo iridescent virus.</title>
        <authorList>
            <person name="Jakob N.J."/>
            <person name="Mueller K."/>
            <person name="Bahr U."/>
            <person name="Darai G."/>
        </authorList>
    </citation>
    <scope>NUCLEOTIDE SEQUENCE [LARGE SCALE GENOMIC DNA]</scope>
</reference>
<reference key="2">
    <citation type="journal article" date="2007" name="Virol. J.">
        <title>Comparative genomic analysis of the family Iridoviridae: re-annotating and defining the core set of iridovirus genes.</title>
        <authorList>
            <person name="Eaton H.E."/>
            <person name="Metcalf J."/>
            <person name="Penny E."/>
            <person name="Tcherepanov V."/>
            <person name="Upton C."/>
            <person name="Brunetti C.R."/>
        </authorList>
    </citation>
    <scope>GENOME REANNOTATION</scope>
</reference>
<accession>Q91FN1</accession>
<keyword id="KW-1185">Reference proteome</keyword>
<proteinExistence type="predicted"/>
<protein>
    <recommendedName>
        <fullName>Uncharacterized protein 293R</fullName>
    </recommendedName>
</protein>
<organism>
    <name type="scientific">Invertebrate iridescent virus 6</name>
    <name type="common">IIV-6</name>
    <name type="synonym">Chilo iridescent virus</name>
    <dbReference type="NCBI Taxonomy" id="176652"/>
    <lineage>
        <taxon>Viruses</taxon>
        <taxon>Varidnaviria</taxon>
        <taxon>Bamfordvirae</taxon>
        <taxon>Nucleocytoviricota</taxon>
        <taxon>Megaviricetes</taxon>
        <taxon>Pimascovirales</taxon>
        <taxon>Iridoviridae</taxon>
        <taxon>Betairidovirinae</taxon>
        <taxon>Iridovirus</taxon>
    </lineage>
</organism>
<sequence length="152" mass="18424">MASVDTYKKNWKQFFNDHDLDDNIQQQLYNIINNMRLEDFRIIITNHNTVDDEIGPRPYSEFTIGDVKGELHCCGYFFIKNNTNYIIDYYKFQDQFYESTSFCINDIKELIFTSLFEESNEHMLEINDEENRIEIQDIFKKFFDVILIEKTY</sequence>